<dbReference type="EMBL" id="AY305869">
    <property type="protein sequence ID" value="AAQ64004.1"/>
    <property type="status" value="ALT_INIT"/>
    <property type="molecule type" value="mRNA"/>
</dbReference>
<dbReference type="EMBL" id="EF597812">
    <property type="protein sequence ID" value="ABQ85109.1"/>
    <property type="molecule type" value="Genomic_DNA"/>
</dbReference>
<dbReference type="EMBL" id="EF597813">
    <property type="protein sequence ID" value="ABQ85110.1"/>
    <property type="molecule type" value="Genomic_DNA"/>
</dbReference>
<dbReference type="EMBL" id="EF597814">
    <property type="protein sequence ID" value="ABQ85111.1"/>
    <property type="molecule type" value="Genomic_DNA"/>
</dbReference>
<dbReference type="EMBL" id="EF597815">
    <property type="protein sequence ID" value="ABQ85112.1"/>
    <property type="molecule type" value="Genomic_DNA"/>
</dbReference>
<dbReference type="EMBL" id="EF597816">
    <property type="protein sequence ID" value="ABQ85113.1"/>
    <property type="molecule type" value="Genomic_DNA"/>
</dbReference>
<dbReference type="EMBL" id="EF597817">
    <property type="protein sequence ID" value="ABQ85114.1"/>
    <property type="molecule type" value="Genomic_DNA"/>
</dbReference>
<dbReference type="EMBL" id="EF597818">
    <property type="protein sequence ID" value="ABQ85115.1"/>
    <property type="molecule type" value="Genomic_DNA"/>
</dbReference>
<dbReference type="EMBL" id="EF597819">
    <property type="protein sequence ID" value="ABQ85116.1"/>
    <property type="molecule type" value="Genomic_DNA"/>
</dbReference>
<dbReference type="EMBL" id="EF597820">
    <property type="protein sequence ID" value="ABQ85117.1"/>
    <property type="molecule type" value="Genomic_DNA"/>
</dbReference>
<dbReference type="EMBL" id="EF597821">
    <property type="protein sequence ID" value="ABQ85118.1"/>
    <property type="molecule type" value="Genomic_DNA"/>
</dbReference>
<dbReference type="EMBL" id="EF597822">
    <property type="protein sequence ID" value="ABQ85119.1"/>
    <property type="molecule type" value="Genomic_DNA"/>
</dbReference>
<dbReference type="EMBL" id="EF597824">
    <property type="protein sequence ID" value="ABQ85121.1"/>
    <property type="molecule type" value="Genomic_DNA"/>
</dbReference>
<dbReference type="EMBL" id="EF597825">
    <property type="protein sequence ID" value="ABQ85122.1"/>
    <property type="molecule type" value="Genomic_DNA"/>
</dbReference>
<dbReference type="EMBL" id="EF597826">
    <property type="protein sequence ID" value="ABQ85123.1"/>
    <property type="molecule type" value="Genomic_DNA"/>
</dbReference>
<dbReference type="EMBL" id="EF597827">
    <property type="protein sequence ID" value="ABQ85124.1"/>
    <property type="molecule type" value="Genomic_DNA"/>
</dbReference>
<dbReference type="EMBL" id="AL138647">
    <property type="protein sequence ID" value="CAB75809.1"/>
    <property type="status" value="ALT_INIT"/>
    <property type="molecule type" value="Genomic_DNA"/>
</dbReference>
<dbReference type="EMBL" id="CP002686">
    <property type="protein sequence ID" value="AEE79983.1"/>
    <property type="molecule type" value="Genomic_DNA"/>
</dbReference>
<dbReference type="EMBL" id="BT011724">
    <property type="protein sequence ID" value="AAS49087.1"/>
    <property type="molecule type" value="mRNA"/>
</dbReference>
<dbReference type="EMBL" id="AK176640">
    <property type="protein sequence ID" value="BAD44403.1"/>
    <property type="molecule type" value="mRNA"/>
</dbReference>
<dbReference type="PIR" id="T47814">
    <property type="entry name" value="T47814"/>
</dbReference>
<dbReference type="RefSeq" id="NP_191549.2">
    <property type="nucleotide sequence ID" value="NM_115853.5"/>
</dbReference>
<dbReference type="SMR" id="Q6NMD6"/>
<dbReference type="BioGRID" id="10474">
    <property type="interactions" value="32"/>
</dbReference>
<dbReference type="FunCoup" id="Q6NMD6">
    <property type="interactions" value="2"/>
</dbReference>
<dbReference type="IntAct" id="Q6NMD6">
    <property type="interactions" value="32"/>
</dbReference>
<dbReference type="STRING" id="3702.Q6NMD6"/>
<dbReference type="PaxDb" id="3702-AT3G59900.1"/>
<dbReference type="ProteomicsDB" id="240613"/>
<dbReference type="EnsemblPlants" id="AT3G59900.1">
    <property type="protein sequence ID" value="AT3G59900.1"/>
    <property type="gene ID" value="AT3G59900"/>
</dbReference>
<dbReference type="GeneID" id="825160"/>
<dbReference type="Gramene" id="AT3G59900.1">
    <property type="protein sequence ID" value="AT3G59900.1"/>
    <property type="gene ID" value="AT3G59900"/>
</dbReference>
<dbReference type="KEGG" id="ath:AT3G59900"/>
<dbReference type="Araport" id="AT3G59900"/>
<dbReference type="TAIR" id="AT3G59900">
    <property type="gene designation" value="ARGOS"/>
</dbReference>
<dbReference type="eggNOG" id="ENOG502S4R4">
    <property type="taxonomic scope" value="Eukaryota"/>
</dbReference>
<dbReference type="HOGENOM" id="CLU_132308_2_0_1"/>
<dbReference type="InParanoid" id="Q6NMD6"/>
<dbReference type="OMA" id="RKNMSFR"/>
<dbReference type="PhylomeDB" id="Q6NMD6"/>
<dbReference type="PRO" id="PR:Q6NMD6"/>
<dbReference type="Proteomes" id="UP000006548">
    <property type="component" value="Chromosome 3"/>
</dbReference>
<dbReference type="ExpressionAtlas" id="Q6NMD6">
    <property type="expression patterns" value="baseline and differential"/>
</dbReference>
<dbReference type="GO" id="GO:0005737">
    <property type="term" value="C:cytoplasm"/>
    <property type="evidence" value="ECO:0000314"/>
    <property type="project" value="UniProtKB"/>
</dbReference>
<dbReference type="GO" id="GO:0005783">
    <property type="term" value="C:endoplasmic reticulum"/>
    <property type="evidence" value="ECO:0000314"/>
    <property type="project" value="TAIR"/>
</dbReference>
<dbReference type="GO" id="GO:0016020">
    <property type="term" value="C:membrane"/>
    <property type="evidence" value="ECO:0000314"/>
    <property type="project" value="UniProtKB"/>
</dbReference>
<dbReference type="GO" id="GO:0005634">
    <property type="term" value="C:nucleus"/>
    <property type="evidence" value="ECO:0000314"/>
    <property type="project" value="UniProtKB"/>
</dbReference>
<dbReference type="GO" id="GO:0071369">
    <property type="term" value="P:cellular response to ethylene stimulus"/>
    <property type="evidence" value="ECO:0000270"/>
    <property type="project" value="UniProtKB"/>
</dbReference>
<dbReference type="GO" id="GO:0046622">
    <property type="term" value="P:positive regulation of organ growth"/>
    <property type="evidence" value="ECO:0000315"/>
    <property type="project" value="TAIR"/>
</dbReference>
<dbReference type="GO" id="GO:0042127">
    <property type="term" value="P:regulation of cell population proliferation"/>
    <property type="evidence" value="ECO:0000315"/>
    <property type="project" value="TAIR"/>
</dbReference>
<dbReference type="GO" id="GO:0048638">
    <property type="term" value="P:regulation of developmental growth"/>
    <property type="evidence" value="ECO:0000315"/>
    <property type="project" value="TAIR"/>
</dbReference>
<dbReference type="GO" id="GO:0009733">
    <property type="term" value="P:response to auxin"/>
    <property type="evidence" value="ECO:0000270"/>
    <property type="project" value="TAIR"/>
</dbReference>
<dbReference type="InterPro" id="IPR037468">
    <property type="entry name" value="ARGOS/ARL/OSR1"/>
</dbReference>
<dbReference type="PANTHER" id="PTHR36023">
    <property type="entry name" value="ARGOS-LIKE PROTEIN"/>
    <property type="match status" value="1"/>
</dbReference>
<dbReference type="PANTHER" id="PTHR36023:SF16">
    <property type="entry name" value="PROTEIN AUXIN-REGULATED GENE INVOLVED IN ORGAN SIZE"/>
    <property type="match status" value="1"/>
</dbReference>
<feature type="chain" id="PRO_0000423596" description="Protein AUXIN-REGULATED GENE INVOLVED IN ORGAN SIZE">
    <location>
        <begin position="1"/>
        <end position="130"/>
    </location>
</feature>
<feature type="transmembrane region" description="Helical" evidence="3">
    <location>
        <begin position="70"/>
        <end position="90"/>
    </location>
</feature>
<feature type="transmembrane region" description="Helical" evidence="3">
    <location>
        <begin position="94"/>
        <end position="114"/>
    </location>
</feature>
<feature type="region of interest" description="Organ Size Related (OSR) domain" evidence="1">
    <location>
        <begin position="65"/>
        <end position="116"/>
    </location>
</feature>
<gene>
    <name type="primary">ARGOS</name>
    <name type="ordered locus">At3g59900</name>
    <name type="ORF">F24G16.170</name>
</gene>
<sequence length="130" mass="14695">MIREISNLQKDIINIQDSYSNNRVMDVGRNNRKNMSFRSSPEKSKQELRRSFSAQKRMMIPANYFSLESLFLLVGLTASLLILPLVLPPLPPPPFMLLLVPIGIMVLLVVLAFMPSSHSNANTDVTCNFM</sequence>
<reference key="1">
    <citation type="journal article" date="2003" name="Plant Cell">
        <title>The Arabidopsis auxin-inducible gene ARGOS controls lateral organ size.</title>
        <authorList>
            <person name="Hu Y."/>
            <person name="Xie Q."/>
            <person name="Chua N.-H."/>
        </authorList>
    </citation>
    <scope>NUCLEOTIDE SEQUENCE [MRNA]</scope>
    <scope>FUNCTION</scope>
    <scope>DISRUPTION PHENOTYPE</scope>
    <scope>INDUCTION BY AUXIN</scope>
    <scope>TISSUE SPECIFICITY</scope>
    <scope>DEVELOPMENTAL STAGE</scope>
    <scope>SUBCELLULAR LOCATION</scope>
    <source>
        <strain>cv. Columbia</strain>
    </source>
</reference>
<reference key="2">
    <citation type="journal article" date="2007" name="Genetics">
        <title>The genetic architecture of shoot branching in Arabidopsis thaliana: a comparative assessment of candidate gene associations vs. quantitative trait locus mapping.</title>
        <authorList>
            <person name="Ehrenreich I.M."/>
            <person name="Stafford P.A."/>
            <person name="Purugganan M.D."/>
        </authorList>
    </citation>
    <scope>NUCLEOTIDE SEQUENCE [GENOMIC DNA]</scope>
    <source>
        <strain>cv. Ag-0</strain>
        <strain>cv. An-1</strain>
        <strain>cv. Br-0</strain>
        <strain>cv. C24</strain>
        <strain>cv. Edi-0</strain>
        <strain>cv. Kin-0</strain>
        <strain>cv. Landsberg erecta</strain>
        <strain>cv. Ll-0</strain>
        <strain>cv. Ms-0</strain>
        <strain>cv. Mt-0</strain>
        <strain>cv. Nd-1</strain>
        <strain>cv. Nok-3</strain>
        <strain>cv. Oy-0</strain>
        <strain>cv. Se-0</strain>
        <strain>cv. Wa-1</strain>
    </source>
</reference>
<reference key="3">
    <citation type="journal article" date="2000" name="Nature">
        <title>Sequence and analysis of chromosome 3 of the plant Arabidopsis thaliana.</title>
        <authorList>
            <person name="Salanoubat M."/>
            <person name="Lemcke K."/>
            <person name="Rieger M."/>
            <person name="Ansorge W."/>
            <person name="Unseld M."/>
            <person name="Fartmann B."/>
            <person name="Valle G."/>
            <person name="Bloecker H."/>
            <person name="Perez-Alonso M."/>
            <person name="Obermaier B."/>
            <person name="Delseny M."/>
            <person name="Boutry M."/>
            <person name="Grivell L.A."/>
            <person name="Mache R."/>
            <person name="Puigdomenech P."/>
            <person name="De Simone V."/>
            <person name="Choisne N."/>
            <person name="Artiguenave F."/>
            <person name="Robert C."/>
            <person name="Brottier P."/>
            <person name="Wincker P."/>
            <person name="Cattolico L."/>
            <person name="Weissenbach J."/>
            <person name="Saurin W."/>
            <person name="Quetier F."/>
            <person name="Schaefer M."/>
            <person name="Mueller-Auer S."/>
            <person name="Gabel C."/>
            <person name="Fuchs M."/>
            <person name="Benes V."/>
            <person name="Wurmbach E."/>
            <person name="Drzonek H."/>
            <person name="Erfle H."/>
            <person name="Jordan N."/>
            <person name="Bangert S."/>
            <person name="Wiedelmann R."/>
            <person name="Kranz H."/>
            <person name="Voss H."/>
            <person name="Holland R."/>
            <person name="Brandt P."/>
            <person name="Nyakatura G."/>
            <person name="Vezzi A."/>
            <person name="D'Angelo M."/>
            <person name="Pallavicini A."/>
            <person name="Toppo S."/>
            <person name="Simionati B."/>
            <person name="Conrad A."/>
            <person name="Hornischer K."/>
            <person name="Kauer G."/>
            <person name="Loehnert T.-H."/>
            <person name="Nordsiek G."/>
            <person name="Reichelt J."/>
            <person name="Scharfe M."/>
            <person name="Schoen O."/>
            <person name="Bargues M."/>
            <person name="Terol J."/>
            <person name="Climent J."/>
            <person name="Navarro P."/>
            <person name="Collado C."/>
            <person name="Perez-Perez A."/>
            <person name="Ottenwaelder B."/>
            <person name="Duchemin D."/>
            <person name="Cooke R."/>
            <person name="Laudie M."/>
            <person name="Berger-Llauro C."/>
            <person name="Purnelle B."/>
            <person name="Masuy D."/>
            <person name="de Haan M."/>
            <person name="Maarse A.C."/>
            <person name="Alcaraz J.-P."/>
            <person name="Cottet A."/>
            <person name="Casacuberta E."/>
            <person name="Monfort A."/>
            <person name="Argiriou A."/>
            <person name="Flores M."/>
            <person name="Liguori R."/>
            <person name="Vitale D."/>
            <person name="Mannhaupt G."/>
            <person name="Haase D."/>
            <person name="Schoof H."/>
            <person name="Rudd S."/>
            <person name="Zaccaria P."/>
            <person name="Mewes H.-W."/>
            <person name="Mayer K.F.X."/>
            <person name="Kaul S."/>
            <person name="Town C.D."/>
            <person name="Koo H.L."/>
            <person name="Tallon L.J."/>
            <person name="Jenkins J."/>
            <person name="Rooney T."/>
            <person name="Rizzo M."/>
            <person name="Walts A."/>
            <person name="Utterback T."/>
            <person name="Fujii C.Y."/>
            <person name="Shea T.P."/>
            <person name="Creasy T.H."/>
            <person name="Haas B."/>
            <person name="Maiti R."/>
            <person name="Wu D."/>
            <person name="Peterson J."/>
            <person name="Van Aken S."/>
            <person name="Pai G."/>
            <person name="Militscher J."/>
            <person name="Sellers P."/>
            <person name="Gill J.E."/>
            <person name="Feldblyum T.V."/>
            <person name="Preuss D."/>
            <person name="Lin X."/>
            <person name="Nierman W.C."/>
            <person name="Salzberg S.L."/>
            <person name="White O."/>
            <person name="Venter J.C."/>
            <person name="Fraser C.M."/>
            <person name="Kaneko T."/>
            <person name="Nakamura Y."/>
            <person name="Sato S."/>
            <person name="Kato T."/>
            <person name="Asamizu E."/>
            <person name="Sasamoto S."/>
            <person name="Kimura T."/>
            <person name="Idesawa K."/>
            <person name="Kawashima K."/>
            <person name="Kishida Y."/>
            <person name="Kiyokawa C."/>
            <person name="Kohara M."/>
            <person name="Matsumoto M."/>
            <person name="Matsuno A."/>
            <person name="Muraki A."/>
            <person name="Nakayama S."/>
            <person name="Nakazaki N."/>
            <person name="Shinpo S."/>
            <person name="Takeuchi C."/>
            <person name="Wada T."/>
            <person name="Watanabe A."/>
            <person name="Yamada M."/>
            <person name="Yasuda M."/>
            <person name="Tabata S."/>
        </authorList>
    </citation>
    <scope>NUCLEOTIDE SEQUENCE [LARGE SCALE GENOMIC DNA]</scope>
    <source>
        <strain>cv. Columbia</strain>
    </source>
</reference>
<reference key="4">
    <citation type="journal article" date="2017" name="Plant J.">
        <title>Araport11: a complete reannotation of the Arabidopsis thaliana reference genome.</title>
        <authorList>
            <person name="Cheng C.Y."/>
            <person name="Krishnakumar V."/>
            <person name="Chan A.P."/>
            <person name="Thibaud-Nissen F."/>
            <person name="Schobel S."/>
            <person name="Town C.D."/>
        </authorList>
    </citation>
    <scope>GENOME REANNOTATION</scope>
    <source>
        <strain>cv. Columbia</strain>
    </source>
</reference>
<reference key="5">
    <citation type="submission" date="2004-03" db="EMBL/GenBank/DDBJ databases">
        <title>Arabidopsis ORF clones.</title>
        <authorList>
            <person name="Cheuk R.F."/>
            <person name="Chen H."/>
            <person name="Kim C.J."/>
            <person name="Shinn P."/>
            <person name="Carninci P."/>
            <person name="Hayashizaki Y."/>
            <person name="Ishida J."/>
            <person name="Kamiya A."/>
            <person name="Kawai J."/>
            <person name="Narusaka M."/>
            <person name="Sakurai T."/>
            <person name="Satou M."/>
            <person name="Seki M."/>
            <person name="Shinozaki K."/>
            <person name="Ecker J.R."/>
        </authorList>
    </citation>
    <scope>NUCLEOTIDE SEQUENCE [LARGE SCALE MRNA]</scope>
    <source>
        <strain>cv. Columbia</strain>
    </source>
</reference>
<reference key="6">
    <citation type="submission" date="2004-09" db="EMBL/GenBank/DDBJ databases">
        <title>Large-scale analysis of RIKEN Arabidopsis full-length (RAFL) cDNAs.</title>
        <authorList>
            <person name="Totoki Y."/>
            <person name="Seki M."/>
            <person name="Ishida J."/>
            <person name="Nakajima M."/>
            <person name="Enju A."/>
            <person name="Kamiya A."/>
            <person name="Narusaka M."/>
            <person name="Shin-i T."/>
            <person name="Nakagawa M."/>
            <person name="Sakamoto N."/>
            <person name="Oishi K."/>
            <person name="Kohara Y."/>
            <person name="Kobayashi M."/>
            <person name="Toyoda A."/>
            <person name="Sakaki Y."/>
            <person name="Sakurai T."/>
            <person name="Iida K."/>
            <person name="Akiyama K."/>
            <person name="Satou M."/>
            <person name="Toyoda T."/>
            <person name="Konagaya A."/>
            <person name="Carninci P."/>
            <person name="Kawai J."/>
            <person name="Hayashizaki Y."/>
            <person name="Shinozaki K."/>
        </authorList>
    </citation>
    <scope>NUCLEOTIDE SEQUENCE [LARGE SCALE MRNA]</scope>
    <source>
        <strain>cv. Columbia</strain>
    </source>
</reference>
<reference key="7">
    <citation type="journal article" date="2011" name="New Phytol.">
        <title>Arabidopsis ORGAN SIZE RELATED1 regulates organ growth and final organ size in orchestration with ARGOS and ARL.</title>
        <authorList>
            <person name="Feng G."/>
            <person name="Qin Z."/>
            <person name="Yan J."/>
            <person name="Zhang X."/>
            <person name="Hu Y."/>
        </authorList>
    </citation>
    <scope>FUNCTION</scope>
    <scope>DISRUPTION PHENOTYPE</scope>
    <scope>SUBCELLULAR LOCATION</scope>
    <source>
        <strain>cv. Columbia</strain>
    </source>
</reference>
<reference key="8">
    <citation type="journal article" date="2012" name="BMC Plant Biol.">
        <title>Identification of genes involved in the ACC-mediated control of root cell elongation in Arabidopsis thaliana.</title>
        <authorList>
            <person name="Markakis M.N."/>
            <person name="De Cnodder T."/>
            <person name="Lewandowski M."/>
            <person name="Simon D."/>
            <person name="Boron A."/>
            <person name="Balcerowicz D."/>
            <person name="Doubbo T."/>
            <person name="Taconnat L."/>
            <person name="Renou J.P."/>
            <person name="Hoefte H."/>
            <person name="Verbelen J.P."/>
            <person name="Vissenberg K."/>
        </authorList>
    </citation>
    <scope>INDUCTION BY ETHYLENE</scope>
</reference>
<name>ARGOS_ARATH</name>
<organism>
    <name type="scientific">Arabidopsis thaliana</name>
    <name type="common">Mouse-ear cress</name>
    <dbReference type="NCBI Taxonomy" id="3702"/>
    <lineage>
        <taxon>Eukaryota</taxon>
        <taxon>Viridiplantae</taxon>
        <taxon>Streptophyta</taxon>
        <taxon>Embryophyta</taxon>
        <taxon>Tracheophyta</taxon>
        <taxon>Spermatophyta</taxon>
        <taxon>Magnoliopsida</taxon>
        <taxon>eudicotyledons</taxon>
        <taxon>Gunneridae</taxon>
        <taxon>Pentapetalae</taxon>
        <taxon>rosids</taxon>
        <taxon>malvids</taxon>
        <taxon>Brassicales</taxon>
        <taxon>Brassicaceae</taxon>
        <taxon>Camelineae</taxon>
        <taxon>Arabidopsis</taxon>
    </lineage>
</organism>
<keyword id="KW-0963">Cytoplasm</keyword>
<keyword id="KW-0217">Developmental protein</keyword>
<keyword id="KW-0256">Endoplasmic reticulum</keyword>
<keyword id="KW-0472">Membrane</keyword>
<keyword id="KW-0539">Nucleus</keyword>
<keyword id="KW-1185">Reference proteome</keyword>
<keyword id="KW-0812">Transmembrane</keyword>
<keyword id="KW-1133">Transmembrane helix</keyword>
<accession>Q6NMD6</accession>
<accession>Q9M1Y4</accession>
<evidence type="ECO:0000250" key="1"/>
<evidence type="ECO:0000250" key="2">
    <source>
        <dbReference type="UniProtKB" id="Q7X6L2"/>
    </source>
</evidence>
<evidence type="ECO:0000255" key="3"/>
<evidence type="ECO:0000269" key="4">
    <source>
    </source>
</evidence>
<evidence type="ECO:0000269" key="5">
    <source>
    </source>
</evidence>
<evidence type="ECO:0000269" key="6">
    <source>
    </source>
</evidence>
<evidence type="ECO:0000305" key="7"/>
<proteinExistence type="evidence at transcript level"/>
<comment type="function">
    <text evidence="4 5">Promotes cell proliferation-dependent organ growth. Takes part in the AXR1-dependent auxin signaling pathway that requires ANT during organogenesis.</text>
</comment>
<comment type="subcellular location">
    <subcellularLocation>
        <location evidence="2">Membrane</location>
        <topology evidence="2">Multi-pass membrane protein</topology>
    </subcellularLocation>
    <subcellularLocation>
        <location evidence="4">Nucleus</location>
    </subcellularLocation>
    <subcellularLocation>
        <location evidence="4">Cytoplasm</location>
    </subcellularLocation>
    <subcellularLocation>
        <location evidence="5">Endoplasmic reticulum</location>
    </subcellularLocation>
</comment>
<comment type="tissue specificity">
    <text evidence="4">Mostly expressed in flowers, inflorescence stems, leaf primordia and young leaves, and, to a lower extent, in siliques, cotyledon vascular bundles, roots (pericycle and root tips) and mature leaves.</text>
</comment>
<comment type="developmental stage">
    <text evidence="4">In flowers, accumulates in stamen filaments as well as in the apices and bases of juvenile and elongating siliques. Present in leaf primordia.</text>
</comment>
<comment type="induction">
    <text evidence="4 6">By auxin and ethylene (1-aminocyclopropane-1-carboxylic acid (ACC)).</text>
</comment>
<comment type="domain">
    <text evidence="1">The OSR domain is sufficient to promote organ growth.</text>
</comment>
<comment type="disruption phenotype">
    <text evidence="4 5">Reduced aerial organs mainly due to changes in cell number and the duration of organ growth. When associated with ORS1 disruption, reduction in organ size.</text>
</comment>
<comment type="similarity">
    <text evidence="7">Belongs to the plant organ size related (OSR) protein family.</text>
</comment>
<comment type="sequence caution" evidence="7">
    <conflict type="erroneous initiation">
        <sequence resource="EMBL-CDS" id="AAQ64004"/>
    </conflict>
    <text>Truncated N-terminus.</text>
</comment>
<comment type="sequence caution" evidence="7">
    <conflict type="erroneous initiation">
        <sequence resource="EMBL-CDS" id="CAB75809"/>
    </conflict>
    <text>Truncated N-terminus.</text>
</comment>
<protein>
    <recommendedName>
        <fullName>Protein AUXIN-REGULATED GENE INVOLVED IN ORGAN SIZE</fullName>
        <shortName>AtARGOS</shortName>
    </recommendedName>
</protein>